<name>ACYP_RHOJR</name>
<gene>
    <name type="primary">acyP</name>
    <name type="ordered locus">RHA1_ro06527</name>
</gene>
<proteinExistence type="inferred from homology"/>
<keyword id="KW-0378">Hydrolase</keyword>
<organism>
    <name type="scientific">Rhodococcus jostii (strain RHA1)</name>
    <dbReference type="NCBI Taxonomy" id="101510"/>
    <lineage>
        <taxon>Bacteria</taxon>
        <taxon>Bacillati</taxon>
        <taxon>Actinomycetota</taxon>
        <taxon>Actinomycetes</taxon>
        <taxon>Mycobacteriales</taxon>
        <taxon>Nocardiaceae</taxon>
        <taxon>Rhodococcus</taxon>
    </lineage>
</organism>
<evidence type="ECO:0000255" key="1">
    <source>
        <dbReference type="PROSITE-ProRule" id="PRU00520"/>
    </source>
</evidence>
<evidence type="ECO:0000305" key="2"/>
<reference key="1">
    <citation type="journal article" date="2006" name="Proc. Natl. Acad. Sci. U.S.A.">
        <title>The complete genome of Rhodococcus sp. RHA1 provides insights into a catabolic powerhouse.</title>
        <authorList>
            <person name="McLeod M.P."/>
            <person name="Warren R.L."/>
            <person name="Hsiao W.W.L."/>
            <person name="Araki N."/>
            <person name="Myhre M."/>
            <person name="Fernandes C."/>
            <person name="Miyazawa D."/>
            <person name="Wong W."/>
            <person name="Lillquist A.L."/>
            <person name="Wang D."/>
            <person name="Dosanjh M."/>
            <person name="Hara H."/>
            <person name="Petrescu A."/>
            <person name="Morin R.D."/>
            <person name="Yang G."/>
            <person name="Stott J.M."/>
            <person name="Schein J.E."/>
            <person name="Shin H."/>
            <person name="Smailus D."/>
            <person name="Siddiqui A.S."/>
            <person name="Marra M.A."/>
            <person name="Jones S.J.M."/>
            <person name="Holt R."/>
            <person name="Brinkman F.S.L."/>
            <person name="Miyauchi K."/>
            <person name="Fukuda M."/>
            <person name="Davies J.E."/>
            <person name="Mohn W.W."/>
            <person name="Eltis L.D."/>
        </authorList>
    </citation>
    <scope>NUCLEOTIDE SEQUENCE [LARGE SCALE GENOMIC DNA]</scope>
    <source>
        <strain>RHA1</strain>
    </source>
</reference>
<comment type="catalytic activity">
    <reaction>
        <text>an acyl phosphate + H2O = a carboxylate + phosphate + H(+)</text>
        <dbReference type="Rhea" id="RHEA:14965"/>
        <dbReference type="ChEBI" id="CHEBI:15377"/>
        <dbReference type="ChEBI" id="CHEBI:15378"/>
        <dbReference type="ChEBI" id="CHEBI:29067"/>
        <dbReference type="ChEBI" id="CHEBI:43474"/>
        <dbReference type="ChEBI" id="CHEBI:59918"/>
        <dbReference type="EC" id="3.6.1.7"/>
    </reaction>
</comment>
<comment type="similarity">
    <text evidence="2">Belongs to the acylphosphatase family.</text>
</comment>
<accession>Q0S2D6</accession>
<protein>
    <recommendedName>
        <fullName>Acylphosphatase</fullName>
        <ecNumber>3.6.1.7</ecNumber>
    </recommendedName>
    <alternativeName>
        <fullName>Acylphosphate phosphohydrolase</fullName>
    </alternativeName>
</protein>
<sequence length="89" mass="9913">MERMTAWVHGFVQGVGFRWWTRARALELGLVGYAANQKDGRVLVIAEGPRDKLETLLTLLRSGDTPGAVDLVVEQWDSARGDLTGFVER</sequence>
<feature type="chain" id="PRO_0000326783" description="Acylphosphatase">
    <location>
        <begin position="1"/>
        <end position="89"/>
    </location>
</feature>
<feature type="domain" description="Acylphosphatase-like" evidence="1">
    <location>
        <begin position="3"/>
        <end position="89"/>
    </location>
</feature>
<feature type="active site" evidence="1">
    <location>
        <position position="18"/>
    </location>
</feature>
<feature type="active site" evidence="1">
    <location>
        <position position="36"/>
    </location>
</feature>
<dbReference type="EC" id="3.6.1.7"/>
<dbReference type="EMBL" id="CP000431">
    <property type="protein sequence ID" value="ABG98300.1"/>
    <property type="molecule type" value="Genomic_DNA"/>
</dbReference>
<dbReference type="SMR" id="Q0S2D6"/>
<dbReference type="KEGG" id="rha:RHA1_ro06527"/>
<dbReference type="eggNOG" id="COG1254">
    <property type="taxonomic scope" value="Bacteria"/>
</dbReference>
<dbReference type="HOGENOM" id="CLU_141932_3_0_11"/>
<dbReference type="Proteomes" id="UP000008710">
    <property type="component" value="Chromosome"/>
</dbReference>
<dbReference type="GO" id="GO:0003998">
    <property type="term" value="F:acylphosphatase activity"/>
    <property type="evidence" value="ECO:0007669"/>
    <property type="project" value="UniProtKB-EC"/>
</dbReference>
<dbReference type="Gene3D" id="3.30.70.100">
    <property type="match status" value="1"/>
</dbReference>
<dbReference type="InterPro" id="IPR020456">
    <property type="entry name" value="Acylphosphatase"/>
</dbReference>
<dbReference type="InterPro" id="IPR001792">
    <property type="entry name" value="Acylphosphatase-like_dom"/>
</dbReference>
<dbReference type="InterPro" id="IPR036046">
    <property type="entry name" value="Acylphosphatase-like_dom_sf"/>
</dbReference>
<dbReference type="InterPro" id="IPR017968">
    <property type="entry name" value="Acylphosphatase_CS"/>
</dbReference>
<dbReference type="NCBIfam" id="NF010997">
    <property type="entry name" value="PRK14422.1"/>
    <property type="match status" value="1"/>
</dbReference>
<dbReference type="PANTHER" id="PTHR47268">
    <property type="entry name" value="ACYLPHOSPHATASE"/>
    <property type="match status" value="1"/>
</dbReference>
<dbReference type="PANTHER" id="PTHR47268:SF4">
    <property type="entry name" value="ACYLPHOSPHATASE"/>
    <property type="match status" value="1"/>
</dbReference>
<dbReference type="Pfam" id="PF00708">
    <property type="entry name" value="Acylphosphatase"/>
    <property type="match status" value="1"/>
</dbReference>
<dbReference type="SUPFAM" id="SSF54975">
    <property type="entry name" value="Acylphosphatase/BLUF domain-like"/>
    <property type="match status" value="1"/>
</dbReference>
<dbReference type="PROSITE" id="PS00150">
    <property type="entry name" value="ACYLPHOSPHATASE_1"/>
    <property type="match status" value="1"/>
</dbReference>
<dbReference type="PROSITE" id="PS00151">
    <property type="entry name" value="ACYLPHOSPHATASE_2"/>
    <property type="match status" value="1"/>
</dbReference>
<dbReference type="PROSITE" id="PS51160">
    <property type="entry name" value="ACYLPHOSPHATASE_3"/>
    <property type="match status" value="1"/>
</dbReference>